<accession>Q9UJU5</accession>
<accession>Q9BYM2</accession>
<accession>Q9UDD1</accession>
<feature type="chain" id="PRO_0000091817" description="Forkhead box protein D3">
    <location>
        <begin position="1"/>
        <end position="478"/>
    </location>
</feature>
<feature type="DNA-binding region" description="Fork-head" evidence="1">
    <location>
        <begin position="141"/>
        <end position="235"/>
    </location>
</feature>
<feature type="region of interest" description="Disordered" evidence="2">
    <location>
        <begin position="1"/>
        <end position="136"/>
    </location>
</feature>
<feature type="compositionally biased region" description="Acidic residues" evidence="2">
    <location>
        <begin position="21"/>
        <end position="39"/>
    </location>
</feature>
<feature type="compositionally biased region" description="Gly residues" evidence="2">
    <location>
        <begin position="104"/>
        <end position="128"/>
    </location>
</feature>
<feature type="sequence conflict" description="In Ref. 3; AAK13574." evidence="7" ref="3">
    <original>V</original>
    <variation>D</variation>
    <location>
        <position position="200"/>
    </location>
</feature>
<feature type="sequence conflict" description="In Ref. 3; AAK13574." evidence="7" ref="3">
    <original>GNPG</original>
    <variation>ATRP</variation>
    <location>
        <begin position="207"/>
        <end position="210"/>
    </location>
</feature>
<feature type="sequence conflict" description="In Ref. 3; AAK13574." evidence="7" ref="3">
    <original>R</original>
    <variation>A</variation>
    <location>
        <position position="239"/>
    </location>
</feature>
<organism>
    <name type="scientific">Homo sapiens</name>
    <name type="common">Human</name>
    <dbReference type="NCBI Taxonomy" id="9606"/>
    <lineage>
        <taxon>Eukaryota</taxon>
        <taxon>Metazoa</taxon>
        <taxon>Chordata</taxon>
        <taxon>Craniata</taxon>
        <taxon>Vertebrata</taxon>
        <taxon>Euteleostomi</taxon>
        <taxon>Mammalia</taxon>
        <taxon>Eutheria</taxon>
        <taxon>Euarchontoglires</taxon>
        <taxon>Primates</taxon>
        <taxon>Haplorrhini</taxon>
        <taxon>Catarrhini</taxon>
        <taxon>Hominidae</taxon>
        <taxon>Homo</taxon>
    </lineage>
</organism>
<evidence type="ECO:0000255" key="1">
    <source>
        <dbReference type="PROSITE-ProRule" id="PRU00089"/>
    </source>
</evidence>
<evidence type="ECO:0000256" key="2">
    <source>
        <dbReference type="SAM" id="MobiDB-lite"/>
    </source>
</evidence>
<evidence type="ECO:0000269" key="3">
    <source>
    </source>
</evidence>
<evidence type="ECO:0000269" key="4">
    <source>
    </source>
</evidence>
<evidence type="ECO:0000269" key="5">
    <source>
    </source>
</evidence>
<evidence type="ECO:0000269" key="6">
    <source>
    </source>
</evidence>
<evidence type="ECO:0000305" key="7"/>
<name>FOXD3_HUMAN</name>
<dbReference type="EMBL" id="AF197560">
    <property type="protein sequence ID" value="AAF05844.1"/>
    <property type="molecule type" value="Genomic_DNA"/>
</dbReference>
<dbReference type="EMBL" id="AL049636">
    <property type="status" value="NOT_ANNOTATED_CDS"/>
    <property type="molecule type" value="Genomic_DNA"/>
</dbReference>
<dbReference type="EMBL" id="L12142">
    <property type="protein sequence ID" value="AAK13574.1"/>
    <property type="molecule type" value="mRNA"/>
</dbReference>
<dbReference type="CCDS" id="CCDS624.1"/>
<dbReference type="RefSeq" id="NP_036315.1">
    <property type="nucleotide sequence ID" value="NM_012183.3"/>
</dbReference>
<dbReference type="SMR" id="Q9UJU5"/>
<dbReference type="BioGRID" id="117959">
    <property type="interactions" value="38"/>
</dbReference>
<dbReference type="FunCoup" id="Q9UJU5">
    <property type="interactions" value="993"/>
</dbReference>
<dbReference type="IntAct" id="Q9UJU5">
    <property type="interactions" value="23"/>
</dbReference>
<dbReference type="MINT" id="Q9UJU5"/>
<dbReference type="STRING" id="9606.ENSP00000360157"/>
<dbReference type="GlyGen" id="Q9UJU5">
    <property type="glycosylation" value="1 site, 1 O-linked glycan (1 site)"/>
</dbReference>
<dbReference type="iPTMnet" id="Q9UJU5"/>
<dbReference type="PhosphoSitePlus" id="Q9UJU5"/>
<dbReference type="BioMuta" id="FOXD3"/>
<dbReference type="DMDM" id="8134475"/>
<dbReference type="jPOST" id="Q9UJU5"/>
<dbReference type="MassIVE" id="Q9UJU5"/>
<dbReference type="PaxDb" id="9606-ENSP00000360157"/>
<dbReference type="PeptideAtlas" id="Q9UJU5"/>
<dbReference type="ProteomicsDB" id="84658"/>
<dbReference type="ABCD" id="Q9UJU5">
    <property type="antibodies" value="1 sequenced antibody"/>
</dbReference>
<dbReference type="Antibodypedia" id="19495">
    <property type="antibodies" value="297 antibodies from 36 providers"/>
</dbReference>
<dbReference type="DNASU" id="27022"/>
<dbReference type="Ensembl" id="ENST00000371116.4">
    <property type="protein sequence ID" value="ENSP00000360157.2"/>
    <property type="gene ID" value="ENSG00000187140.6"/>
</dbReference>
<dbReference type="GeneID" id="27022"/>
<dbReference type="KEGG" id="hsa:27022"/>
<dbReference type="MANE-Select" id="ENST00000371116.4">
    <property type="protein sequence ID" value="ENSP00000360157.2"/>
    <property type="RefSeq nucleotide sequence ID" value="NM_012183.3"/>
    <property type="RefSeq protein sequence ID" value="NP_036315.1"/>
</dbReference>
<dbReference type="UCSC" id="uc001dax.3">
    <property type="organism name" value="human"/>
</dbReference>
<dbReference type="AGR" id="HGNC:3804"/>
<dbReference type="CTD" id="27022"/>
<dbReference type="DisGeNET" id="27022"/>
<dbReference type="GeneCards" id="FOXD3"/>
<dbReference type="HGNC" id="HGNC:3804">
    <property type="gene designation" value="FOXD3"/>
</dbReference>
<dbReference type="HPA" id="ENSG00000187140">
    <property type="expression patterns" value="Tissue enhanced (intestine)"/>
</dbReference>
<dbReference type="MalaCards" id="FOXD3"/>
<dbReference type="MIM" id="607836">
    <property type="type" value="phenotype"/>
</dbReference>
<dbReference type="MIM" id="611539">
    <property type="type" value="gene"/>
</dbReference>
<dbReference type="neXtProt" id="NX_Q9UJU5"/>
<dbReference type="OpenTargets" id="ENSG00000187140"/>
<dbReference type="PharmGKB" id="PA28221"/>
<dbReference type="VEuPathDB" id="HostDB:ENSG00000187140"/>
<dbReference type="eggNOG" id="KOG2294">
    <property type="taxonomic scope" value="Eukaryota"/>
</dbReference>
<dbReference type="GeneTree" id="ENSGT00940000161645"/>
<dbReference type="HOGENOM" id="CLU_040357_0_0_1"/>
<dbReference type="InParanoid" id="Q9UJU5"/>
<dbReference type="OMA" id="PVQAKWP"/>
<dbReference type="OrthoDB" id="5402974at2759"/>
<dbReference type="PAN-GO" id="Q9UJU5">
    <property type="GO annotations" value="5 GO annotations based on evolutionary models"/>
</dbReference>
<dbReference type="PhylomeDB" id="Q9UJU5"/>
<dbReference type="TreeFam" id="TF316127"/>
<dbReference type="PathwayCommons" id="Q9UJU5"/>
<dbReference type="Reactome" id="R-HSA-2892247">
    <property type="pathway name" value="POU5F1 (OCT4), SOX2, NANOG activate genes related to proliferation"/>
</dbReference>
<dbReference type="Reactome" id="R-HSA-9856649">
    <property type="pathway name" value="Transcriptional and post-translational regulation of MITF-M expression and activity"/>
</dbReference>
<dbReference type="SignaLink" id="Q9UJU5"/>
<dbReference type="BioGRID-ORCS" id="27022">
    <property type="hits" value="27 hits in 1170 CRISPR screens"/>
</dbReference>
<dbReference type="GeneWiki" id="FOXD3"/>
<dbReference type="GenomeRNAi" id="27022"/>
<dbReference type="Pharos" id="Q9UJU5">
    <property type="development level" value="Tbio"/>
</dbReference>
<dbReference type="PRO" id="PR:Q9UJU5"/>
<dbReference type="Proteomes" id="UP000005640">
    <property type="component" value="Chromosome 1"/>
</dbReference>
<dbReference type="RNAct" id="Q9UJU5">
    <property type="molecule type" value="protein"/>
</dbReference>
<dbReference type="Bgee" id="ENSG00000187140">
    <property type="expression patterns" value="Expressed in sural nerve and 70 other cell types or tissues"/>
</dbReference>
<dbReference type="GO" id="GO:0000785">
    <property type="term" value="C:chromatin"/>
    <property type="evidence" value="ECO:0000314"/>
    <property type="project" value="BHF-UCL"/>
</dbReference>
<dbReference type="GO" id="GO:0005654">
    <property type="term" value="C:nucleoplasm"/>
    <property type="evidence" value="ECO:0000304"/>
    <property type="project" value="Reactome"/>
</dbReference>
<dbReference type="GO" id="GO:0003700">
    <property type="term" value="F:DNA-binding transcription factor activity"/>
    <property type="evidence" value="ECO:0000250"/>
    <property type="project" value="UniProtKB"/>
</dbReference>
<dbReference type="GO" id="GO:0000981">
    <property type="term" value="F:DNA-binding transcription factor activity, RNA polymerase II-specific"/>
    <property type="evidence" value="ECO:0000247"/>
    <property type="project" value="NTNU_SB"/>
</dbReference>
<dbReference type="GO" id="GO:0001227">
    <property type="term" value="F:DNA-binding transcription repressor activity, RNA polymerase II-specific"/>
    <property type="evidence" value="ECO:0000314"/>
    <property type="project" value="BHF-UCL"/>
</dbReference>
<dbReference type="GO" id="GO:0000978">
    <property type="term" value="F:RNA polymerase II cis-regulatory region sequence-specific DNA binding"/>
    <property type="evidence" value="ECO:0000318"/>
    <property type="project" value="GO_Central"/>
</dbReference>
<dbReference type="GO" id="GO:0000977">
    <property type="term" value="F:RNA polymerase II transcription regulatory region sequence-specific DNA binding"/>
    <property type="evidence" value="ECO:0000314"/>
    <property type="project" value="BHF-UCL"/>
</dbReference>
<dbReference type="GO" id="GO:1990837">
    <property type="term" value="F:sequence-specific double-stranded DNA binding"/>
    <property type="evidence" value="ECO:0000314"/>
    <property type="project" value="ARUK-UCL"/>
</dbReference>
<dbReference type="GO" id="GO:0009653">
    <property type="term" value="P:anatomical structure morphogenesis"/>
    <property type="evidence" value="ECO:0000318"/>
    <property type="project" value="GO_Central"/>
</dbReference>
<dbReference type="GO" id="GO:0030154">
    <property type="term" value="P:cell differentiation"/>
    <property type="evidence" value="ECO:0000318"/>
    <property type="project" value="GO_Central"/>
</dbReference>
<dbReference type="GO" id="GO:0001701">
    <property type="term" value="P:in utero embryonic development"/>
    <property type="evidence" value="ECO:0000250"/>
    <property type="project" value="UniProtKB"/>
</dbReference>
<dbReference type="GO" id="GO:0000122">
    <property type="term" value="P:negative regulation of transcription by RNA polymerase II"/>
    <property type="evidence" value="ECO:0000314"/>
    <property type="project" value="BHF-UCL"/>
</dbReference>
<dbReference type="GO" id="GO:0045944">
    <property type="term" value="P:positive regulation of transcription by RNA polymerase II"/>
    <property type="evidence" value="ECO:0000314"/>
    <property type="project" value="UniProtKB"/>
</dbReference>
<dbReference type="GO" id="GO:0006357">
    <property type="term" value="P:regulation of transcription by RNA polymerase II"/>
    <property type="evidence" value="ECO:0000318"/>
    <property type="project" value="GO_Central"/>
</dbReference>
<dbReference type="CDD" id="cd20047">
    <property type="entry name" value="FH_FOXD3"/>
    <property type="match status" value="1"/>
</dbReference>
<dbReference type="FunFam" id="1.10.10.10:FF:000016">
    <property type="entry name" value="Forkhead box protein I1"/>
    <property type="match status" value="1"/>
</dbReference>
<dbReference type="Gene3D" id="1.10.10.10">
    <property type="entry name" value="Winged helix-like DNA-binding domain superfamily/Winged helix DNA-binding domain"/>
    <property type="match status" value="1"/>
</dbReference>
<dbReference type="InterPro" id="IPR047392">
    <property type="entry name" value="FH_FOXD3"/>
</dbReference>
<dbReference type="InterPro" id="IPR001766">
    <property type="entry name" value="Fork_head_dom"/>
</dbReference>
<dbReference type="InterPro" id="IPR050211">
    <property type="entry name" value="FOX_domain-containing"/>
</dbReference>
<dbReference type="InterPro" id="IPR018122">
    <property type="entry name" value="TF_fork_head_CS_1"/>
</dbReference>
<dbReference type="InterPro" id="IPR030456">
    <property type="entry name" value="TF_fork_head_CS_2"/>
</dbReference>
<dbReference type="InterPro" id="IPR036388">
    <property type="entry name" value="WH-like_DNA-bd_sf"/>
</dbReference>
<dbReference type="InterPro" id="IPR036390">
    <property type="entry name" value="WH_DNA-bd_sf"/>
</dbReference>
<dbReference type="PANTHER" id="PTHR11829">
    <property type="entry name" value="FORKHEAD BOX PROTEIN"/>
    <property type="match status" value="1"/>
</dbReference>
<dbReference type="PANTHER" id="PTHR11829:SF405">
    <property type="entry name" value="FORKHEAD BOX PROTEIN D3"/>
    <property type="match status" value="1"/>
</dbReference>
<dbReference type="Pfam" id="PF00250">
    <property type="entry name" value="Forkhead"/>
    <property type="match status" value="1"/>
</dbReference>
<dbReference type="PRINTS" id="PR00053">
    <property type="entry name" value="FORKHEAD"/>
</dbReference>
<dbReference type="SMART" id="SM00339">
    <property type="entry name" value="FH"/>
    <property type="match status" value="1"/>
</dbReference>
<dbReference type="SUPFAM" id="SSF46785">
    <property type="entry name" value="Winged helix' DNA-binding domain"/>
    <property type="match status" value="1"/>
</dbReference>
<dbReference type="PROSITE" id="PS00657">
    <property type="entry name" value="FORK_HEAD_1"/>
    <property type="match status" value="1"/>
</dbReference>
<dbReference type="PROSITE" id="PS00658">
    <property type="entry name" value="FORK_HEAD_2"/>
    <property type="match status" value="1"/>
</dbReference>
<dbReference type="PROSITE" id="PS50039">
    <property type="entry name" value="FORK_HEAD_3"/>
    <property type="match status" value="1"/>
</dbReference>
<protein>
    <recommendedName>
        <fullName>Forkhead box protein D3</fullName>
    </recommendedName>
    <alternativeName>
        <fullName>HNF3/FH transcription factor genesis</fullName>
    </alternativeName>
</protein>
<proteinExistence type="evidence at protein level"/>
<comment type="function">
    <text evidence="3 5">Binds to the consensus sequence 5'-A[AT]T[AG]TTTGTTT-3' and acts as a transcriptional repressor (PubMed:11891324). Also acts as a transcriptional activator (PubMed:11891324). Negatively regulates transcription of transcriptional repressor RHIT/ZNF205 (PubMed:22306510). Promotes development of neural crest cells from neural tube progenitors (PubMed:11891324). Restricts neural progenitor cells to the neural crest lineage while suppressing interneuron differentiation (PubMed:11891324). Required for maintenance of pluripotent cells in the pre-implantation and peri-implantation stages of embryogenesis (PubMed:11891324).</text>
</comment>
<comment type="subunit">
    <text evidence="3">Interacts with POU5F1.</text>
</comment>
<comment type="interaction">
    <interactant intactId="EBI-475674">
        <id>Q9UJU5</id>
    </interactant>
    <interactant intactId="EBI-475687">
        <id>Q01860</id>
        <label>POU5F1</label>
    </interactant>
    <organismsDiffer>false</organismsDiffer>
    <experiments>2</experiments>
</comment>
<comment type="subcellular location">
    <subcellularLocation>
        <location evidence="7">Nucleus</location>
    </subcellularLocation>
</comment>
<comment type="tissue specificity">
    <text evidence="6">Expressed in chronic myeloid leukemia, Jurkat T-cell leukemia and teratocarcinoma cell lines, but not in any other cell lines or normal tissues examined.</text>
</comment>
<comment type="developmental stage">
    <text evidence="5">In spleen levels are higher in adult than in fetal tissue.</text>
</comment>
<comment type="disease" evidence="4">
    <disease id="DI-02737">
        <name>Autoimmune disease 1</name>
        <acronym>AIS1</acronym>
        <description>An autoimmune disorder characterized by the association of vitiligo with autoimmune thyroiditis (Hashimoto thyroiditis).</description>
        <dbReference type="MIM" id="607836"/>
    </disease>
    <text>Disease susceptibility is associated with variants affecting the gene represented in this entry.</text>
</comment>
<sequence>MTLSGGGSASDMSGQTVLTAEDVDIDVVGEGDDGLEEKDSDAGCDSPAGPPELRLDEADEVPPAAPHHGQPQPPHQQPLTLPKEAAGAGAGPGGDVGAPEADGCKGGVGGEEGGASGGGPGAGSGSAGGLAPSKPKNSLVKPPYSYIALITMAILQSPQKKLTLSGICEFISNRFPYYREKFPAWQNSIRHNLSLNDCFVKIPREPGNPGKGNYWTLDPQSEDMFDNGSFLRRRKRFKRHQQEHLREQTALMMQSFGAYSLAAAAGAAGPYGRPYGLHPAAAAGAYSHPAAAAAAAAAAALQYPYALPPVAPVLPPAVPLLPSGELGRKAAAFGSQLGPGLQLQLNSLGAAAAAAGTAGAAGTTASLIKSEPSARPSFSIENIIGGGPAAPGGSAVGAGVAGGTGGSGGGSTAQSFLRPPGTVQSAALMATHQPLSLSRTTATIAPILSVPLSGQFLQPAASAAAAAAAAAQAKWPAQ</sequence>
<keyword id="KW-0010">Activator</keyword>
<keyword id="KW-0217">Developmental protein</keyword>
<keyword id="KW-0238">DNA-binding</keyword>
<keyword id="KW-0539">Nucleus</keyword>
<keyword id="KW-1267">Proteomics identification</keyword>
<keyword id="KW-1185">Reference proteome</keyword>
<keyword id="KW-0678">Repressor</keyword>
<keyword id="KW-0804">Transcription</keyword>
<keyword id="KW-0805">Transcription regulation</keyword>
<gene>
    <name type="primary">FOXD3</name>
    <name type="synonym">HFH2</name>
</gene>
<reference key="1">
    <citation type="submission" date="1999-10" db="EMBL/GenBank/DDBJ databases">
        <title>The winged helix transcriptional regulator Genesis/HFH2/FoxD3 is located at human chromosome 1p31-32 in PAC dj792g4 as a single exon.</title>
        <authorList>
            <person name="Ramsey H.C."/>
            <person name="Hromas R."/>
        </authorList>
    </citation>
    <scope>NUCLEOTIDE SEQUENCE [GENOMIC DNA]</scope>
</reference>
<reference key="2">
    <citation type="journal article" date="2006" name="Nature">
        <title>The DNA sequence and biological annotation of human chromosome 1.</title>
        <authorList>
            <person name="Gregory S.G."/>
            <person name="Barlow K.F."/>
            <person name="McLay K.E."/>
            <person name="Kaul R."/>
            <person name="Swarbreck D."/>
            <person name="Dunham A."/>
            <person name="Scott C.E."/>
            <person name="Howe K.L."/>
            <person name="Woodfine K."/>
            <person name="Spencer C.C.A."/>
            <person name="Jones M.C."/>
            <person name="Gillson C."/>
            <person name="Searle S."/>
            <person name="Zhou Y."/>
            <person name="Kokocinski F."/>
            <person name="McDonald L."/>
            <person name="Evans R."/>
            <person name="Phillips K."/>
            <person name="Atkinson A."/>
            <person name="Cooper R."/>
            <person name="Jones C."/>
            <person name="Hall R.E."/>
            <person name="Andrews T.D."/>
            <person name="Lloyd C."/>
            <person name="Ainscough R."/>
            <person name="Almeida J.P."/>
            <person name="Ambrose K.D."/>
            <person name="Anderson F."/>
            <person name="Andrew R.W."/>
            <person name="Ashwell R.I.S."/>
            <person name="Aubin K."/>
            <person name="Babbage A.K."/>
            <person name="Bagguley C.L."/>
            <person name="Bailey J."/>
            <person name="Beasley H."/>
            <person name="Bethel G."/>
            <person name="Bird C.P."/>
            <person name="Bray-Allen S."/>
            <person name="Brown J.Y."/>
            <person name="Brown A.J."/>
            <person name="Buckley D."/>
            <person name="Burton J."/>
            <person name="Bye J."/>
            <person name="Carder C."/>
            <person name="Chapman J.C."/>
            <person name="Clark S.Y."/>
            <person name="Clarke G."/>
            <person name="Clee C."/>
            <person name="Cobley V."/>
            <person name="Collier R.E."/>
            <person name="Corby N."/>
            <person name="Coville G.J."/>
            <person name="Davies J."/>
            <person name="Deadman R."/>
            <person name="Dunn M."/>
            <person name="Earthrowl M."/>
            <person name="Ellington A.G."/>
            <person name="Errington H."/>
            <person name="Frankish A."/>
            <person name="Frankland J."/>
            <person name="French L."/>
            <person name="Garner P."/>
            <person name="Garnett J."/>
            <person name="Gay L."/>
            <person name="Ghori M.R.J."/>
            <person name="Gibson R."/>
            <person name="Gilby L.M."/>
            <person name="Gillett W."/>
            <person name="Glithero R.J."/>
            <person name="Grafham D.V."/>
            <person name="Griffiths C."/>
            <person name="Griffiths-Jones S."/>
            <person name="Grocock R."/>
            <person name="Hammond S."/>
            <person name="Harrison E.S.I."/>
            <person name="Hart E."/>
            <person name="Haugen E."/>
            <person name="Heath P.D."/>
            <person name="Holmes S."/>
            <person name="Holt K."/>
            <person name="Howden P.J."/>
            <person name="Hunt A.R."/>
            <person name="Hunt S.E."/>
            <person name="Hunter G."/>
            <person name="Isherwood J."/>
            <person name="James R."/>
            <person name="Johnson C."/>
            <person name="Johnson D."/>
            <person name="Joy A."/>
            <person name="Kay M."/>
            <person name="Kershaw J.K."/>
            <person name="Kibukawa M."/>
            <person name="Kimberley A.M."/>
            <person name="King A."/>
            <person name="Knights A.J."/>
            <person name="Lad H."/>
            <person name="Laird G."/>
            <person name="Lawlor S."/>
            <person name="Leongamornlert D.A."/>
            <person name="Lloyd D.M."/>
            <person name="Loveland J."/>
            <person name="Lovell J."/>
            <person name="Lush M.J."/>
            <person name="Lyne R."/>
            <person name="Martin S."/>
            <person name="Mashreghi-Mohammadi M."/>
            <person name="Matthews L."/>
            <person name="Matthews N.S.W."/>
            <person name="McLaren S."/>
            <person name="Milne S."/>
            <person name="Mistry S."/>
            <person name="Moore M.J.F."/>
            <person name="Nickerson T."/>
            <person name="O'Dell C.N."/>
            <person name="Oliver K."/>
            <person name="Palmeiri A."/>
            <person name="Palmer S.A."/>
            <person name="Parker A."/>
            <person name="Patel D."/>
            <person name="Pearce A.V."/>
            <person name="Peck A.I."/>
            <person name="Pelan S."/>
            <person name="Phelps K."/>
            <person name="Phillimore B.J."/>
            <person name="Plumb R."/>
            <person name="Rajan J."/>
            <person name="Raymond C."/>
            <person name="Rouse G."/>
            <person name="Saenphimmachak C."/>
            <person name="Sehra H.K."/>
            <person name="Sheridan E."/>
            <person name="Shownkeen R."/>
            <person name="Sims S."/>
            <person name="Skuce C.D."/>
            <person name="Smith M."/>
            <person name="Steward C."/>
            <person name="Subramanian S."/>
            <person name="Sycamore N."/>
            <person name="Tracey A."/>
            <person name="Tromans A."/>
            <person name="Van Helmond Z."/>
            <person name="Wall M."/>
            <person name="Wallis J.M."/>
            <person name="White S."/>
            <person name="Whitehead S.L."/>
            <person name="Wilkinson J.E."/>
            <person name="Willey D.L."/>
            <person name="Williams H."/>
            <person name="Wilming L."/>
            <person name="Wray P.W."/>
            <person name="Wu Z."/>
            <person name="Coulson A."/>
            <person name="Vaudin M."/>
            <person name="Sulston J.E."/>
            <person name="Durbin R.M."/>
            <person name="Hubbard T."/>
            <person name="Wooster R."/>
            <person name="Dunham I."/>
            <person name="Carter N.P."/>
            <person name="McVean G."/>
            <person name="Ross M.T."/>
            <person name="Harrow J."/>
            <person name="Olson M.V."/>
            <person name="Beck S."/>
            <person name="Rogers J."/>
            <person name="Bentley D.R."/>
        </authorList>
    </citation>
    <scope>NUCLEOTIDE SEQUENCE [LARGE SCALE GENOMIC DNA]</scope>
</reference>
<reference key="3">
    <citation type="journal article" date="1993" name="Blood">
        <title>Drosophila forkhead homologues are expressed in a lineage-restricted manner in human hematopoietic cells.</title>
        <authorList>
            <person name="Hromas R."/>
            <person name="Moore J."/>
            <person name="Johnston T."/>
            <person name="Socha C."/>
            <person name="Klemsz M."/>
        </authorList>
    </citation>
    <scope>NUCLEOTIDE SEQUENCE [MRNA] OF 133-244</scope>
    <scope>TISSUE SPECIFICITY</scope>
    <source>
        <tissue>Chronic myeloid leukemia cell</tissue>
    </source>
</reference>
<reference key="4">
    <citation type="journal article" date="2002" name="Proc. Natl. Acad. Sci. U.S.A.">
        <title>The embryonic stem cell transcription factors Oct-4 and FoxD3 interact to regulate endodermal-specific promoter expression.</title>
        <authorList>
            <person name="Guo Y."/>
            <person name="Costa R."/>
            <person name="Ramsey H."/>
            <person name="Starnes T."/>
            <person name="Vance G."/>
            <person name="Robertson K."/>
            <person name="Kelley M."/>
            <person name="Reinbold R."/>
            <person name="Scholer H."/>
            <person name="Hromas R."/>
        </authorList>
    </citation>
    <scope>FUNCTION</scope>
    <scope>INTERACTION WITH POU5F1</scope>
</reference>
<reference key="5">
    <citation type="journal article" date="2005" name="J. Invest. Dermatol.">
        <title>Candidate functional promoter variant in the FOXD3 melanoblast developmental regulator gene in autosomal dominant vitiligo.</title>
        <authorList>
            <person name="Alkhateeb A."/>
            <person name="Fain P.R."/>
            <person name="Spritz R.A."/>
        </authorList>
    </citation>
    <scope>INVOLVEMENT IN AIS1</scope>
</reference>
<reference evidence="7" key="6">
    <citation type="journal article" date="2012" name="Free Radic. Biol. Med.">
        <title>Identification of Rhit as a novel transcriptional repressor of human Mpv17-like protein with a mitigating effect on mitochondrial dysfunction, and its transcriptional regulation by FOXD3 and GABP.</title>
        <authorList>
            <person name="Iida R."/>
            <person name="Ueki M."/>
            <person name="Yasuda T."/>
        </authorList>
    </citation>
    <scope>FUNCTION</scope>
    <scope>DEVELOPMENTAL STAGE</scope>
</reference>